<proteinExistence type="inferred from homology"/>
<reference key="1">
    <citation type="journal article" date="2003" name="J. Bacteriol.">
        <title>Complete genome sequence of the ammonia-oxidizing bacterium and obligate chemolithoautotroph Nitrosomonas europaea.</title>
        <authorList>
            <person name="Chain P."/>
            <person name="Lamerdin J.E."/>
            <person name="Larimer F.W."/>
            <person name="Regala W."/>
            <person name="Lao V."/>
            <person name="Land M.L."/>
            <person name="Hauser L."/>
            <person name="Hooper A.B."/>
            <person name="Klotz M.G."/>
            <person name="Norton J."/>
            <person name="Sayavedra-Soto L.A."/>
            <person name="Arciero D.M."/>
            <person name="Hommes N.G."/>
            <person name="Whittaker M.M."/>
            <person name="Arp D.J."/>
        </authorList>
    </citation>
    <scope>NUCLEOTIDE SEQUENCE [LARGE SCALE GENOMIC DNA]</scope>
    <source>
        <strain>ATCC 19718 / CIP 103999 / KCTC 2705 / NBRC 14298</strain>
    </source>
</reference>
<keyword id="KW-0255">Endonuclease</keyword>
<keyword id="KW-0378">Hydrolase</keyword>
<keyword id="KW-0540">Nuclease</keyword>
<keyword id="KW-1185">Reference proteome</keyword>
<keyword id="KW-0694">RNA-binding</keyword>
<keyword id="KW-0819">tRNA processing</keyword>
<dbReference type="EC" id="3.1.26.5" evidence="1"/>
<dbReference type="EMBL" id="AL954747">
    <property type="protein sequence ID" value="CAD84300.1"/>
    <property type="molecule type" value="Genomic_DNA"/>
</dbReference>
<dbReference type="RefSeq" id="WP_011111024.1">
    <property type="nucleotide sequence ID" value="NC_004757.1"/>
</dbReference>
<dbReference type="SMR" id="Q82X99"/>
<dbReference type="STRING" id="228410.NE0389"/>
<dbReference type="GeneID" id="87103597"/>
<dbReference type="KEGG" id="neu:NE0389"/>
<dbReference type="eggNOG" id="COG0594">
    <property type="taxonomic scope" value="Bacteria"/>
</dbReference>
<dbReference type="HOGENOM" id="CLU_117179_11_2_4"/>
<dbReference type="OrthoDB" id="398329at2"/>
<dbReference type="PhylomeDB" id="Q82X99"/>
<dbReference type="Proteomes" id="UP000001416">
    <property type="component" value="Chromosome"/>
</dbReference>
<dbReference type="GO" id="GO:0030677">
    <property type="term" value="C:ribonuclease P complex"/>
    <property type="evidence" value="ECO:0007669"/>
    <property type="project" value="TreeGrafter"/>
</dbReference>
<dbReference type="GO" id="GO:0042781">
    <property type="term" value="F:3'-tRNA processing endoribonuclease activity"/>
    <property type="evidence" value="ECO:0007669"/>
    <property type="project" value="TreeGrafter"/>
</dbReference>
<dbReference type="GO" id="GO:0004526">
    <property type="term" value="F:ribonuclease P activity"/>
    <property type="evidence" value="ECO:0007669"/>
    <property type="project" value="UniProtKB-UniRule"/>
</dbReference>
<dbReference type="GO" id="GO:0000049">
    <property type="term" value="F:tRNA binding"/>
    <property type="evidence" value="ECO:0007669"/>
    <property type="project" value="UniProtKB-UniRule"/>
</dbReference>
<dbReference type="GO" id="GO:0001682">
    <property type="term" value="P:tRNA 5'-leader removal"/>
    <property type="evidence" value="ECO:0007669"/>
    <property type="project" value="UniProtKB-UniRule"/>
</dbReference>
<dbReference type="Gene3D" id="3.30.230.10">
    <property type="match status" value="1"/>
</dbReference>
<dbReference type="HAMAP" id="MF_00227">
    <property type="entry name" value="RNase_P"/>
    <property type="match status" value="1"/>
</dbReference>
<dbReference type="InterPro" id="IPR020568">
    <property type="entry name" value="Ribosomal_Su5_D2-typ_SF"/>
</dbReference>
<dbReference type="InterPro" id="IPR014721">
    <property type="entry name" value="Ribsml_uS5_D2-typ_fold_subgr"/>
</dbReference>
<dbReference type="InterPro" id="IPR000100">
    <property type="entry name" value="RNase_P"/>
</dbReference>
<dbReference type="NCBIfam" id="TIGR00188">
    <property type="entry name" value="rnpA"/>
    <property type="match status" value="1"/>
</dbReference>
<dbReference type="PANTHER" id="PTHR33992">
    <property type="entry name" value="RIBONUCLEASE P PROTEIN COMPONENT"/>
    <property type="match status" value="1"/>
</dbReference>
<dbReference type="PANTHER" id="PTHR33992:SF1">
    <property type="entry name" value="RIBONUCLEASE P PROTEIN COMPONENT"/>
    <property type="match status" value="1"/>
</dbReference>
<dbReference type="Pfam" id="PF00825">
    <property type="entry name" value="Ribonuclease_P"/>
    <property type="match status" value="1"/>
</dbReference>
<dbReference type="SUPFAM" id="SSF54211">
    <property type="entry name" value="Ribosomal protein S5 domain 2-like"/>
    <property type="match status" value="1"/>
</dbReference>
<evidence type="ECO:0000255" key="1">
    <source>
        <dbReference type="HAMAP-Rule" id="MF_00227"/>
    </source>
</evidence>
<gene>
    <name evidence="1" type="primary">rnpA</name>
    <name type="ordered locus">NE0389</name>
</gene>
<organism>
    <name type="scientific">Nitrosomonas europaea (strain ATCC 19718 / CIP 103999 / KCTC 2705 / NBRC 14298)</name>
    <dbReference type="NCBI Taxonomy" id="228410"/>
    <lineage>
        <taxon>Bacteria</taxon>
        <taxon>Pseudomonadati</taxon>
        <taxon>Pseudomonadota</taxon>
        <taxon>Betaproteobacteria</taxon>
        <taxon>Nitrosomonadales</taxon>
        <taxon>Nitrosomonadaceae</taxon>
        <taxon>Nitrosomonas</taxon>
    </lineage>
</organism>
<comment type="function">
    <text evidence="1">RNaseP catalyzes the removal of the 5'-leader sequence from pre-tRNA to produce the mature 5'-terminus. It can also cleave other RNA substrates such as 4.5S RNA. The protein component plays an auxiliary but essential role in vivo by binding to the 5'-leader sequence and broadening the substrate specificity of the ribozyme.</text>
</comment>
<comment type="catalytic activity">
    <reaction evidence="1">
        <text>Endonucleolytic cleavage of RNA, removing 5'-extranucleotides from tRNA precursor.</text>
        <dbReference type="EC" id="3.1.26.5"/>
    </reaction>
</comment>
<comment type="subunit">
    <text evidence="1">Consists of a catalytic RNA component (M1 or rnpB) and a protein subunit.</text>
</comment>
<comment type="similarity">
    <text evidence="1">Belongs to the RnpA family.</text>
</comment>
<feature type="chain" id="PRO_0000198499" description="Ribonuclease P protein component">
    <location>
        <begin position="1"/>
        <end position="119"/>
    </location>
</feature>
<protein>
    <recommendedName>
        <fullName evidence="1">Ribonuclease P protein component</fullName>
        <shortName evidence="1">RNase P protein</shortName>
        <shortName evidence="1">RNaseP protein</shortName>
        <ecNumber evidence="1">3.1.26.5</ecNumber>
    </recommendedName>
    <alternativeName>
        <fullName evidence="1">Protein C5</fullName>
    </alternativeName>
</protein>
<sequence>MTTRQICTLPRQCKLRKADEFRAVLRNRIVFESLSLRLYVKPIDVDYARIGLIVAKRVERKAVRRNRIKRLIREAFRRHRQMLMGLDCVMQLRHPVELLDSTRIYQEAVMLFNKAARQL</sequence>
<accession>Q82X99</accession>
<name>RNPA_NITEU</name>